<keyword id="KW-0963">Cytoplasm</keyword>
<keyword id="KW-0274">FAD</keyword>
<keyword id="KW-0285">Flavoprotein</keyword>
<keyword id="KW-0520">NAD</keyword>
<keyword id="KW-1185">Reference proteome</keyword>
<keyword id="KW-0819">tRNA processing</keyword>
<protein>
    <recommendedName>
        <fullName evidence="1">tRNA uridine 5-carboxymethylaminomethyl modification enzyme MnmG</fullName>
    </recommendedName>
    <alternativeName>
        <fullName evidence="1">Glucose-inhibited division protein A</fullName>
    </alternativeName>
</protein>
<evidence type="ECO:0000255" key="1">
    <source>
        <dbReference type="HAMAP-Rule" id="MF_00129"/>
    </source>
</evidence>
<proteinExistence type="inferred from homology"/>
<feature type="chain" id="PRO_1000016688" description="tRNA uridine 5-carboxymethylaminomethyl modification enzyme MnmG">
    <location>
        <begin position="1"/>
        <end position="637"/>
    </location>
</feature>
<feature type="binding site" evidence="1">
    <location>
        <begin position="15"/>
        <end position="20"/>
    </location>
    <ligand>
        <name>FAD</name>
        <dbReference type="ChEBI" id="CHEBI:57692"/>
    </ligand>
</feature>
<feature type="binding site" evidence="1">
    <location>
        <position position="127"/>
    </location>
    <ligand>
        <name>FAD</name>
        <dbReference type="ChEBI" id="CHEBI:57692"/>
    </ligand>
</feature>
<feature type="binding site" evidence="1">
    <location>
        <position position="182"/>
    </location>
    <ligand>
        <name>FAD</name>
        <dbReference type="ChEBI" id="CHEBI:57692"/>
    </ligand>
</feature>
<feature type="binding site" evidence="1">
    <location>
        <begin position="276"/>
        <end position="290"/>
    </location>
    <ligand>
        <name>NAD(+)</name>
        <dbReference type="ChEBI" id="CHEBI:57540"/>
    </ligand>
</feature>
<feature type="binding site" evidence="1">
    <location>
        <position position="373"/>
    </location>
    <ligand>
        <name>FAD</name>
        <dbReference type="ChEBI" id="CHEBI:57692"/>
    </ligand>
</feature>
<organism>
    <name type="scientific">Streptococcus pneumoniae serotype 2 (strain D39 / NCTC 7466)</name>
    <dbReference type="NCBI Taxonomy" id="373153"/>
    <lineage>
        <taxon>Bacteria</taxon>
        <taxon>Bacillati</taxon>
        <taxon>Bacillota</taxon>
        <taxon>Bacilli</taxon>
        <taxon>Lactobacillales</taxon>
        <taxon>Streptococcaceae</taxon>
        <taxon>Streptococcus</taxon>
    </lineage>
</organism>
<accession>Q04MU9</accession>
<sequence length="637" mass="71044">MIYHFTEEYDIIVIGAGHAGVEASLAASRMGCKVLLATINIEMLAFMPCNPSIGGSAKGIVVREVDALGGEMAKTIDKTYIQMKMLNTGKGPAVRALRAQADKELYSKEMRKTVENQENLTLRQTMIDEILVEDGKAVGVRTATHQEYAAKAVIVTTGTALRGEIIIGDLKYSSGPNHSLASINLADNLKELGLEIGRFKTGTPPRVKASSINYDVTEIQPGDEVPNHFSYTSRDEDYVKDQVPCWLTYTNGTSHEIIQNNLHRAPMFTGVVKGVGPRYCPSIEDKIVRFADKERHQLFLEPEGRNTEEVYVQGLSTSLPEDVQRDLVHSIKGLENAEMMRTGYAIEYDMVLPHQLRATLETKKISGLFTAGQTNGTSGYEEAAGQGIIAGINAALKIQGKPELILKRSDGYIGVMIDDLVTKGTIEPYRLLTSRAEYRLILRHDNADMRLTEMGREIGLVDDERWARFEIKKNQFDNEMKRLDSIKLKPVKETNAKVEEMGFKPLTDAVTAKEFLRRPEVSYQDVVAFIGPAAEELDDKIIELIETEIKYEGYISKAMDQVAKMKRMEEKRIPANIDWDDIDSIATEARQKFKLINPETIGQASRISGVNPADISILMVYLEGKNRSISKTLQKSK</sequence>
<comment type="function">
    <text evidence="1">NAD-binding protein involved in the addition of a carboxymethylaminomethyl (cmnm) group at the wobble position (U34) of certain tRNAs, forming tRNA-cmnm(5)s(2)U34.</text>
</comment>
<comment type="cofactor">
    <cofactor evidence="1">
        <name>FAD</name>
        <dbReference type="ChEBI" id="CHEBI:57692"/>
    </cofactor>
</comment>
<comment type="subunit">
    <text evidence="1">Homodimer. Heterotetramer of two MnmE and two MnmG subunits.</text>
</comment>
<comment type="subcellular location">
    <subcellularLocation>
        <location evidence="1">Cytoplasm</location>
    </subcellularLocation>
</comment>
<comment type="similarity">
    <text evidence="1">Belongs to the MnmG family.</text>
</comment>
<name>MNMG_STRP2</name>
<dbReference type="EMBL" id="CP000410">
    <property type="protein sequence ID" value="ABJ53608.1"/>
    <property type="molecule type" value="Genomic_DNA"/>
</dbReference>
<dbReference type="RefSeq" id="WP_000639151.1">
    <property type="nucleotide sequence ID" value="NZ_JAMLJR010000002.1"/>
</dbReference>
<dbReference type="SMR" id="Q04MU9"/>
<dbReference type="PaxDb" id="373153-SPD_0129"/>
<dbReference type="KEGG" id="spd:SPD_0129"/>
<dbReference type="eggNOG" id="COG0445">
    <property type="taxonomic scope" value="Bacteria"/>
</dbReference>
<dbReference type="HOGENOM" id="CLU_007831_2_2_9"/>
<dbReference type="BioCyc" id="SPNE373153:G1G6V-142-MONOMER"/>
<dbReference type="Proteomes" id="UP000001452">
    <property type="component" value="Chromosome"/>
</dbReference>
<dbReference type="GO" id="GO:0005829">
    <property type="term" value="C:cytosol"/>
    <property type="evidence" value="ECO:0007669"/>
    <property type="project" value="TreeGrafter"/>
</dbReference>
<dbReference type="GO" id="GO:0050660">
    <property type="term" value="F:flavin adenine dinucleotide binding"/>
    <property type="evidence" value="ECO:0007669"/>
    <property type="project" value="UniProtKB-UniRule"/>
</dbReference>
<dbReference type="GO" id="GO:0030488">
    <property type="term" value="P:tRNA methylation"/>
    <property type="evidence" value="ECO:0007669"/>
    <property type="project" value="TreeGrafter"/>
</dbReference>
<dbReference type="GO" id="GO:0002098">
    <property type="term" value="P:tRNA wobble uridine modification"/>
    <property type="evidence" value="ECO:0007669"/>
    <property type="project" value="InterPro"/>
</dbReference>
<dbReference type="FunFam" id="1.10.10.1800:FF:000001">
    <property type="entry name" value="tRNA uridine 5-carboxymethylaminomethyl modification enzyme MnmG"/>
    <property type="match status" value="1"/>
</dbReference>
<dbReference type="FunFam" id="1.10.150.570:FF:000001">
    <property type="entry name" value="tRNA uridine 5-carboxymethylaminomethyl modification enzyme MnmG"/>
    <property type="match status" value="1"/>
</dbReference>
<dbReference type="FunFam" id="3.50.50.60:FF:000002">
    <property type="entry name" value="tRNA uridine 5-carboxymethylaminomethyl modification enzyme MnmG"/>
    <property type="match status" value="1"/>
</dbReference>
<dbReference type="FunFam" id="3.50.50.60:FF:000063">
    <property type="entry name" value="tRNA uridine 5-carboxymethylaminomethyl modification enzyme MnmG"/>
    <property type="match status" value="1"/>
</dbReference>
<dbReference type="Gene3D" id="3.50.50.60">
    <property type="entry name" value="FAD/NAD(P)-binding domain"/>
    <property type="match status" value="2"/>
</dbReference>
<dbReference type="Gene3D" id="1.10.150.570">
    <property type="entry name" value="GidA associated domain, C-terminal subdomain"/>
    <property type="match status" value="1"/>
</dbReference>
<dbReference type="Gene3D" id="1.10.10.1800">
    <property type="entry name" value="tRNA uridine 5-carboxymethylaminomethyl modification enzyme MnmG/GidA"/>
    <property type="match status" value="1"/>
</dbReference>
<dbReference type="HAMAP" id="MF_00129">
    <property type="entry name" value="MnmG_GidA"/>
    <property type="match status" value="1"/>
</dbReference>
<dbReference type="InterPro" id="IPR036188">
    <property type="entry name" value="FAD/NAD-bd_sf"/>
</dbReference>
<dbReference type="InterPro" id="IPR049312">
    <property type="entry name" value="GIDA_C_N"/>
</dbReference>
<dbReference type="InterPro" id="IPR004416">
    <property type="entry name" value="MnmG"/>
</dbReference>
<dbReference type="InterPro" id="IPR002218">
    <property type="entry name" value="MnmG-rel"/>
</dbReference>
<dbReference type="InterPro" id="IPR020595">
    <property type="entry name" value="MnmG-rel_CS"/>
</dbReference>
<dbReference type="InterPro" id="IPR026904">
    <property type="entry name" value="MnmG_C"/>
</dbReference>
<dbReference type="InterPro" id="IPR047001">
    <property type="entry name" value="MnmG_C_subdom"/>
</dbReference>
<dbReference type="InterPro" id="IPR044920">
    <property type="entry name" value="MnmG_C_subdom_sf"/>
</dbReference>
<dbReference type="InterPro" id="IPR040131">
    <property type="entry name" value="MnmG_N"/>
</dbReference>
<dbReference type="NCBIfam" id="TIGR00136">
    <property type="entry name" value="mnmG_gidA"/>
    <property type="match status" value="1"/>
</dbReference>
<dbReference type="PANTHER" id="PTHR11806">
    <property type="entry name" value="GLUCOSE INHIBITED DIVISION PROTEIN A"/>
    <property type="match status" value="1"/>
</dbReference>
<dbReference type="PANTHER" id="PTHR11806:SF0">
    <property type="entry name" value="PROTEIN MTO1 HOMOLOG, MITOCHONDRIAL"/>
    <property type="match status" value="1"/>
</dbReference>
<dbReference type="Pfam" id="PF01134">
    <property type="entry name" value="GIDA"/>
    <property type="match status" value="1"/>
</dbReference>
<dbReference type="Pfam" id="PF21680">
    <property type="entry name" value="GIDA_C_1st"/>
    <property type="match status" value="1"/>
</dbReference>
<dbReference type="Pfam" id="PF13932">
    <property type="entry name" value="SAM_GIDA_C"/>
    <property type="match status" value="1"/>
</dbReference>
<dbReference type="PRINTS" id="PR00411">
    <property type="entry name" value="PNDRDTASEI"/>
</dbReference>
<dbReference type="SMART" id="SM01228">
    <property type="entry name" value="GIDA_assoc_3"/>
    <property type="match status" value="1"/>
</dbReference>
<dbReference type="SUPFAM" id="SSF51905">
    <property type="entry name" value="FAD/NAD(P)-binding domain"/>
    <property type="match status" value="1"/>
</dbReference>
<dbReference type="PROSITE" id="PS01280">
    <property type="entry name" value="GIDA_1"/>
    <property type="match status" value="1"/>
</dbReference>
<dbReference type="PROSITE" id="PS01281">
    <property type="entry name" value="GIDA_2"/>
    <property type="match status" value="1"/>
</dbReference>
<gene>
    <name evidence="1" type="primary">mnmG</name>
    <name evidence="1" type="synonym">gidA</name>
    <name type="ordered locus">SPD_0129</name>
</gene>
<reference key="1">
    <citation type="journal article" date="2007" name="J. Bacteriol.">
        <title>Genome sequence of Avery's virulent serotype 2 strain D39 of Streptococcus pneumoniae and comparison with that of unencapsulated laboratory strain R6.</title>
        <authorList>
            <person name="Lanie J.A."/>
            <person name="Ng W.-L."/>
            <person name="Kazmierczak K.M."/>
            <person name="Andrzejewski T.M."/>
            <person name="Davidsen T.M."/>
            <person name="Wayne K.J."/>
            <person name="Tettelin H."/>
            <person name="Glass J.I."/>
            <person name="Winkler M.E."/>
        </authorList>
    </citation>
    <scope>NUCLEOTIDE SEQUENCE [LARGE SCALE GENOMIC DNA]</scope>
    <source>
        <strain>D39 / NCTC 7466</strain>
    </source>
</reference>